<comment type="function">
    <text evidence="1 2">Snake prothrombin activator that attacks the hemostatic system of prey. This protein is functionally similar to blood coagulation factor Xa (By similarity). Potent calcium-independent prothrombin activator, possesses high hemorrhagic activity along with metalloproteinase activity. Has considerably stronger activity than FXa.</text>
</comment>
<comment type="cofactor">
    <cofactor evidence="2">
        <name>a divalent metal cation</name>
        <dbReference type="ChEBI" id="CHEBI:60240"/>
    </cofactor>
    <text evidence="2">Binds divalent metal cations.</text>
</comment>
<comment type="activity regulation">
    <text evidence="2">Inhibited by EDTA, but not by PMSF. Activity is not dependent on the presence of calcium ions, phospholipids or FXa inhibitor.</text>
</comment>
<comment type="subunit">
    <text evidence="2">Monomer.</text>
</comment>
<comment type="tissue specificity">
    <text evidence="4">Expressed by the venom gland.</text>
</comment>
<comment type="PTM">
    <text evidence="2">N-glycosylated.</text>
</comment>
<comment type="miscellaneous">
    <text evidence="2">The molecular weight was determined to be 72 kDa with an isoelectric point of 6.67.</text>
</comment>
<reference evidence="4" key="1">
    <citation type="submission" date="2011-08" db="UniProtKB">
        <title>Isolation and characterization of a prothrombin-activator from Bothrops atrox venom.</title>
        <authorList>
            <person name="Sun D."/>
            <person name="Ding Z."/>
            <person name="Li X."/>
            <person name="Cui L."/>
            <person name="Xue Y."/>
        </authorList>
    </citation>
    <scope>PROTEIN SEQUENCE</scope>
    <scope>FUNCTION</scope>
    <scope>COFACTOR</scope>
    <scope>ACTIVITY REGULATION</scope>
    <scope>SUBUNIT</scope>
    <scope>GLYCOSYLATION</scope>
    <source>
        <tissue evidence="2">Venom</tissue>
    </source>
</reference>
<evidence type="ECO:0000250" key="1">
    <source>
        <dbReference type="UniProtKB" id="P82807"/>
    </source>
</evidence>
<evidence type="ECO:0000269" key="2">
    <source ref="1"/>
</evidence>
<evidence type="ECO:0000303" key="3">
    <source ref="1"/>
</evidence>
<evidence type="ECO:0000305" key="4"/>
<accession>B3A0N1</accession>
<keyword id="KW-1204">Blood coagulation cascade activating toxin</keyword>
<keyword id="KW-0903">Direct protein sequencing</keyword>
<keyword id="KW-0325">Glycoprotein</keyword>
<keyword id="KW-1199">Hemostasis impairing toxin</keyword>
<keyword id="KW-0378">Hydrolase</keyword>
<keyword id="KW-0479">Metal-binding</keyword>
<keyword id="KW-0482">Metalloprotease</keyword>
<keyword id="KW-0645">Protease</keyword>
<keyword id="KW-0655">Prothrombin activator</keyword>
<keyword id="KW-0800">Toxin</keyword>
<name>VPA_BOTAT</name>
<dbReference type="GO" id="GO:0005615">
    <property type="term" value="C:extracellular space"/>
    <property type="evidence" value="ECO:0007669"/>
    <property type="project" value="InterPro"/>
</dbReference>
<dbReference type="GO" id="GO:0046872">
    <property type="term" value="F:metal ion binding"/>
    <property type="evidence" value="ECO:0007669"/>
    <property type="project" value="UniProtKB-KW"/>
</dbReference>
<dbReference type="GO" id="GO:0008237">
    <property type="term" value="F:metallopeptidase activity"/>
    <property type="evidence" value="ECO:0007669"/>
    <property type="project" value="UniProtKB-KW"/>
</dbReference>
<dbReference type="GO" id="GO:0016504">
    <property type="term" value="F:peptidase activator activity"/>
    <property type="evidence" value="ECO:0007669"/>
    <property type="project" value="UniProtKB-KW"/>
</dbReference>
<dbReference type="GO" id="GO:0090729">
    <property type="term" value="F:toxin activity"/>
    <property type="evidence" value="ECO:0007669"/>
    <property type="project" value="UniProtKB-KW"/>
</dbReference>
<dbReference type="GO" id="GO:0006508">
    <property type="term" value="P:proteolysis"/>
    <property type="evidence" value="ECO:0007669"/>
    <property type="project" value="UniProtKB-KW"/>
</dbReference>
<dbReference type="InterPro" id="IPR014760">
    <property type="entry name" value="Serum_albumin_N"/>
</dbReference>
<sequence length="15" mass="1614">ALVLIAFAQVLQQCP</sequence>
<organism>
    <name type="scientific">Bothrops atrox</name>
    <name type="common">Barba amarilla</name>
    <name type="synonym">Fer-de-lance</name>
    <dbReference type="NCBI Taxonomy" id="8725"/>
    <lineage>
        <taxon>Eukaryota</taxon>
        <taxon>Metazoa</taxon>
        <taxon>Chordata</taxon>
        <taxon>Craniata</taxon>
        <taxon>Vertebrata</taxon>
        <taxon>Euteleostomi</taxon>
        <taxon>Lepidosauria</taxon>
        <taxon>Squamata</taxon>
        <taxon>Bifurcata</taxon>
        <taxon>Unidentata</taxon>
        <taxon>Episquamata</taxon>
        <taxon>Toxicofera</taxon>
        <taxon>Serpentes</taxon>
        <taxon>Colubroidea</taxon>
        <taxon>Viperidae</taxon>
        <taxon>Crotalinae</taxon>
        <taxon>Bothrops</taxon>
    </lineage>
</organism>
<proteinExistence type="evidence at protein level"/>
<protein>
    <recommendedName>
        <fullName>Venom prothrombin activator</fullName>
        <shortName>vPA</shortName>
    </recommendedName>
</protein>
<feature type="chain" id="PRO_0000414616" description="Venom prothrombin activator">
    <location>
        <begin position="1"/>
        <end position="15" status="greater than"/>
    </location>
</feature>
<feature type="non-terminal residue" evidence="3">
    <location>
        <position position="15"/>
    </location>
</feature>